<dbReference type="EC" id="2.1.1.172" evidence="1"/>
<dbReference type="EMBL" id="CP000863">
    <property type="protein sequence ID" value="ACC58397.1"/>
    <property type="molecule type" value="Genomic_DNA"/>
</dbReference>
<dbReference type="RefSeq" id="WP_000371518.1">
    <property type="nucleotide sequence ID" value="NZ_CP031380.1"/>
</dbReference>
<dbReference type="SMR" id="B2HYF8"/>
<dbReference type="KEGG" id="abc:ACICU_03085"/>
<dbReference type="HOGENOM" id="CLU_049581_0_0_6"/>
<dbReference type="Proteomes" id="UP000008839">
    <property type="component" value="Chromosome"/>
</dbReference>
<dbReference type="GO" id="GO:0005737">
    <property type="term" value="C:cytoplasm"/>
    <property type="evidence" value="ECO:0007669"/>
    <property type="project" value="UniProtKB-SubCell"/>
</dbReference>
<dbReference type="GO" id="GO:0052914">
    <property type="term" value="F:16S rRNA (guanine(1207)-N(2))-methyltransferase activity"/>
    <property type="evidence" value="ECO:0007669"/>
    <property type="project" value="UniProtKB-EC"/>
</dbReference>
<dbReference type="GO" id="GO:0003676">
    <property type="term" value="F:nucleic acid binding"/>
    <property type="evidence" value="ECO:0007669"/>
    <property type="project" value="InterPro"/>
</dbReference>
<dbReference type="CDD" id="cd02440">
    <property type="entry name" value="AdoMet_MTases"/>
    <property type="match status" value="1"/>
</dbReference>
<dbReference type="Gene3D" id="3.40.50.150">
    <property type="entry name" value="Vaccinia Virus protein VP39"/>
    <property type="match status" value="2"/>
</dbReference>
<dbReference type="HAMAP" id="MF_01862">
    <property type="entry name" value="16SrRNA_methyltr_C"/>
    <property type="match status" value="1"/>
</dbReference>
<dbReference type="InterPro" id="IPR002052">
    <property type="entry name" value="DNA_methylase_N6_adenine_CS"/>
</dbReference>
<dbReference type="InterPro" id="IPR013675">
    <property type="entry name" value="Mtase_sm_N"/>
</dbReference>
<dbReference type="InterPro" id="IPR023543">
    <property type="entry name" value="rRNA_ssu_MeTfrase_C"/>
</dbReference>
<dbReference type="InterPro" id="IPR046977">
    <property type="entry name" value="RsmC/RlmG"/>
</dbReference>
<dbReference type="InterPro" id="IPR029063">
    <property type="entry name" value="SAM-dependent_MTases_sf"/>
</dbReference>
<dbReference type="InterPro" id="IPR007848">
    <property type="entry name" value="Small_mtfrase_dom"/>
</dbReference>
<dbReference type="PANTHER" id="PTHR47816">
    <property type="entry name" value="RIBOSOMAL RNA SMALL SUBUNIT METHYLTRANSFERASE C"/>
    <property type="match status" value="1"/>
</dbReference>
<dbReference type="PANTHER" id="PTHR47816:SF4">
    <property type="entry name" value="RIBOSOMAL RNA SMALL SUBUNIT METHYLTRANSFERASE C"/>
    <property type="match status" value="1"/>
</dbReference>
<dbReference type="Pfam" id="PF05175">
    <property type="entry name" value="MTS"/>
    <property type="match status" value="1"/>
</dbReference>
<dbReference type="Pfam" id="PF08468">
    <property type="entry name" value="MTS_N"/>
    <property type="match status" value="1"/>
</dbReference>
<dbReference type="SUPFAM" id="SSF53335">
    <property type="entry name" value="S-adenosyl-L-methionine-dependent methyltransferases"/>
    <property type="match status" value="1"/>
</dbReference>
<evidence type="ECO:0000255" key="1">
    <source>
        <dbReference type="HAMAP-Rule" id="MF_01862"/>
    </source>
</evidence>
<sequence length="337" mass="37521">MDPRSEVILRQHDYLKGRVLLINAPNDALVSQLPTEIDASVWTWNYADYQGFLNAGATAHFSVEFPLQEFDQAIIFVPKSKELLNYILHVVMSHLKIDQSVFLVGEKKGGVERAAKQLQSFGKILKLDSARHCQLWHLKIEKTEKIKPLESWLKTYTVQVNEQELTICALPGVFSQTHLDVGTAVLLPYLNQVKSGRIADFGCGAGIISCYLAKANSSNIIHALDIDAFALQSTEMTFSRNGIGSDQLRLQPVTGIADAPTELDAIVSNPPFHQGIHTNYDASEGLCQNAKKHLKASGELWIVANRFLNYPILIEKHFGQCEIKTDLQGFKVLYACA</sequence>
<keyword id="KW-0963">Cytoplasm</keyword>
<keyword id="KW-0489">Methyltransferase</keyword>
<keyword id="KW-0698">rRNA processing</keyword>
<keyword id="KW-0949">S-adenosyl-L-methionine</keyword>
<keyword id="KW-0808">Transferase</keyword>
<name>RSMC_ACIBC</name>
<reference key="1">
    <citation type="journal article" date="2008" name="Antimicrob. Agents Chemother.">
        <title>Whole-genome pyrosequencing of an epidemic multidrug-resistant Acinetobacter baumannii strain belonging to the European clone II group.</title>
        <authorList>
            <person name="Iacono M."/>
            <person name="Villa L."/>
            <person name="Fortini D."/>
            <person name="Bordoni R."/>
            <person name="Imperi F."/>
            <person name="Bonnal R.J."/>
            <person name="Sicheritz-Ponten T."/>
            <person name="De Bellis G."/>
            <person name="Visca P."/>
            <person name="Cassone A."/>
            <person name="Carattoli A."/>
        </authorList>
    </citation>
    <scope>NUCLEOTIDE SEQUENCE [LARGE SCALE GENOMIC DNA]</scope>
    <source>
        <strain>ACICU</strain>
    </source>
</reference>
<gene>
    <name evidence="1" type="primary">rsmC</name>
    <name type="ordered locus">ACICU_03085</name>
</gene>
<comment type="function">
    <text evidence="1">Specifically methylates the guanine in position 1207 of 16S rRNA in the 30S particle.</text>
</comment>
<comment type="catalytic activity">
    <reaction evidence="1">
        <text>guanosine(1207) in 16S rRNA + S-adenosyl-L-methionine = N(2)-methylguanosine(1207) in 16S rRNA + S-adenosyl-L-homocysteine + H(+)</text>
        <dbReference type="Rhea" id="RHEA:42736"/>
        <dbReference type="Rhea" id="RHEA-COMP:10213"/>
        <dbReference type="Rhea" id="RHEA-COMP:10214"/>
        <dbReference type="ChEBI" id="CHEBI:15378"/>
        <dbReference type="ChEBI" id="CHEBI:57856"/>
        <dbReference type="ChEBI" id="CHEBI:59789"/>
        <dbReference type="ChEBI" id="CHEBI:74269"/>
        <dbReference type="ChEBI" id="CHEBI:74481"/>
        <dbReference type="EC" id="2.1.1.172"/>
    </reaction>
</comment>
<comment type="subunit">
    <text evidence="1">Monomer.</text>
</comment>
<comment type="subcellular location">
    <subcellularLocation>
        <location evidence="1">Cytoplasm</location>
    </subcellularLocation>
</comment>
<comment type="similarity">
    <text evidence="1">Belongs to the methyltransferase superfamily. RsmC family.</text>
</comment>
<organism>
    <name type="scientific">Acinetobacter baumannii (strain ACICU)</name>
    <dbReference type="NCBI Taxonomy" id="405416"/>
    <lineage>
        <taxon>Bacteria</taxon>
        <taxon>Pseudomonadati</taxon>
        <taxon>Pseudomonadota</taxon>
        <taxon>Gammaproteobacteria</taxon>
        <taxon>Moraxellales</taxon>
        <taxon>Moraxellaceae</taxon>
        <taxon>Acinetobacter</taxon>
        <taxon>Acinetobacter calcoaceticus/baumannii complex</taxon>
    </lineage>
</organism>
<feature type="chain" id="PRO_0000369676" description="Ribosomal RNA small subunit methyltransferase C">
    <location>
        <begin position="1"/>
        <end position="337"/>
    </location>
</feature>
<accession>B2HYF8</accession>
<protein>
    <recommendedName>
        <fullName evidence="1">Ribosomal RNA small subunit methyltransferase C</fullName>
        <ecNumber evidence="1">2.1.1.172</ecNumber>
    </recommendedName>
    <alternativeName>
        <fullName evidence="1">16S rRNA m2G1207 methyltransferase</fullName>
    </alternativeName>
    <alternativeName>
        <fullName evidence="1">rRNA (guanine-N(2)-)-methyltransferase RsmC</fullName>
    </alternativeName>
</protein>
<proteinExistence type="inferred from homology"/>